<keyword id="KW-0963">Cytoplasm</keyword>
<keyword id="KW-0224">Dipeptidase</keyword>
<keyword id="KW-0378">Hydrolase</keyword>
<keyword id="KW-0645">Protease</keyword>
<keyword id="KW-1185">Reference proteome</keyword>
<keyword id="KW-0720">Serine protease</keyword>
<accession>Q8FB55</accession>
<comment type="function">
    <text evidence="1">Hydrolyzes dipeptides containing N-terminal aspartate residues. May play a role in allowing the cell to use peptide aspartate to spare carbon otherwise required for the synthesis of the aspartate family of amino acids.</text>
</comment>
<comment type="catalytic activity">
    <reaction evidence="1">
        <text>Dipeptidase E catalyzes the hydrolysis of dipeptides Asp-|-Xaa. It does not act on peptides with N-terminal Glu, Asn or Gln, nor does it cleave isoaspartyl peptides.</text>
        <dbReference type="EC" id="3.4.13.21"/>
    </reaction>
</comment>
<comment type="subcellular location">
    <subcellularLocation>
        <location evidence="1">Cytoplasm</location>
    </subcellularLocation>
</comment>
<comment type="similarity">
    <text evidence="1">Belongs to the peptidase S51 family.</text>
</comment>
<protein>
    <recommendedName>
        <fullName evidence="1">Peptidase E</fullName>
        <ecNumber evidence="1">3.4.13.21</ecNumber>
    </recommendedName>
    <alternativeName>
        <fullName evidence="1">Alpha-aspartyl dipeptidase</fullName>
    </alternativeName>
    <alternativeName>
        <fullName evidence="1">Asp-specific dipeptidase</fullName>
    </alternativeName>
    <alternativeName>
        <fullName evidence="1">Dipeptidase E</fullName>
    </alternativeName>
</protein>
<reference key="1">
    <citation type="journal article" date="2002" name="Proc. Natl. Acad. Sci. U.S.A.">
        <title>Extensive mosaic structure revealed by the complete genome sequence of uropathogenic Escherichia coli.</title>
        <authorList>
            <person name="Welch R.A."/>
            <person name="Burland V."/>
            <person name="Plunkett G. III"/>
            <person name="Redford P."/>
            <person name="Roesch P."/>
            <person name="Rasko D."/>
            <person name="Buckles E.L."/>
            <person name="Liou S.-R."/>
            <person name="Boutin A."/>
            <person name="Hackett J."/>
            <person name="Stroud D."/>
            <person name="Mayhew G.F."/>
            <person name="Rose D.J."/>
            <person name="Zhou S."/>
            <person name="Schwartz D.C."/>
            <person name="Perna N.T."/>
            <person name="Mobley H.L.T."/>
            <person name="Donnenberg M.S."/>
            <person name="Blattner F.R."/>
        </authorList>
    </citation>
    <scope>NUCLEOTIDE SEQUENCE [LARGE SCALE GENOMIC DNA]</scope>
    <source>
        <strain>CFT073 / ATCC 700928 / UPEC</strain>
    </source>
</reference>
<organism>
    <name type="scientific">Escherichia coli O6:H1 (strain CFT073 / ATCC 700928 / UPEC)</name>
    <dbReference type="NCBI Taxonomy" id="199310"/>
    <lineage>
        <taxon>Bacteria</taxon>
        <taxon>Pseudomonadati</taxon>
        <taxon>Pseudomonadota</taxon>
        <taxon>Gammaproteobacteria</taxon>
        <taxon>Enterobacterales</taxon>
        <taxon>Enterobacteriaceae</taxon>
        <taxon>Escherichia</taxon>
    </lineage>
</organism>
<proteinExistence type="inferred from homology"/>
<dbReference type="EC" id="3.4.13.21" evidence="1"/>
<dbReference type="EMBL" id="AE014075">
    <property type="protein sequence ID" value="AAN83406.1"/>
    <property type="molecule type" value="Genomic_DNA"/>
</dbReference>
<dbReference type="RefSeq" id="WP_000421769.1">
    <property type="nucleotide sequence ID" value="NZ_CP051263.1"/>
</dbReference>
<dbReference type="SMR" id="Q8FB55"/>
<dbReference type="STRING" id="199310.c4980"/>
<dbReference type="MEROPS" id="S51.001"/>
<dbReference type="KEGG" id="ecc:c4980"/>
<dbReference type="eggNOG" id="COG3340">
    <property type="taxonomic scope" value="Bacteria"/>
</dbReference>
<dbReference type="HOGENOM" id="CLU_071689_0_0_6"/>
<dbReference type="BioCyc" id="ECOL199310:C4980-MONOMER"/>
<dbReference type="Proteomes" id="UP000001410">
    <property type="component" value="Chromosome"/>
</dbReference>
<dbReference type="GO" id="GO:0005737">
    <property type="term" value="C:cytoplasm"/>
    <property type="evidence" value="ECO:0007669"/>
    <property type="project" value="UniProtKB-SubCell"/>
</dbReference>
<dbReference type="GO" id="GO:0016805">
    <property type="term" value="F:dipeptidase activity"/>
    <property type="evidence" value="ECO:0007669"/>
    <property type="project" value="UniProtKB-UniRule"/>
</dbReference>
<dbReference type="GO" id="GO:0008236">
    <property type="term" value="F:serine-type peptidase activity"/>
    <property type="evidence" value="ECO:0007669"/>
    <property type="project" value="UniProtKB-KW"/>
</dbReference>
<dbReference type="GO" id="GO:0006508">
    <property type="term" value="P:proteolysis"/>
    <property type="evidence" value="ECO:0007669"/>
    <property type="project" value="UniProtKB-UniRule"/>
</dbReference>
<dbReference type="CDD" id="cd03146">
    <property type="entry name" value="GAT1_Peptidase_E"/>
    <property type="match status" value="1"/>
</dbReference>
<dbReference type="FunFam" id="3.40.50.880:FF:000007">
    <property type="entry name" value="Peptidase E"/>
    <property type="match status" value="1"/>
</dbReference>
<dbReference type="Gene3D" id="3.40.50.880">
    <property type="match status" value="1"/>
</dbReference>
<dbReference type="HAMAP" id="MF_00510">
    <property type="entry name" value="Peptidase_E"/>
    <property type="match status" value="1"/>
</dbReference>
<dbReference type="InterPro" id="IPR029062">
    <property type="entry name" value="Class_I_gatase-like"/>
</dbReference>
<dbReference type="InterPro" id="IPR005320">
    <property type="entry name" value="Peptidase_S51"/>
</dbReference>
<dbReference type="InterPro" id="IPR023172">
    <property type="entry name" value="Peptidase_S51_dipeptidase-E"/>
</dbReference>
<dbReference type="NCBIfam" id="NF003642">
    <property type="entry name" value="PRK05282.1"/>
    <property type="match status" value="1"/>
</dbReference>
<dbReference type="PANTHER" id="PTHR20842:SF0">
    <property type="entry name" value="ALPHA-ASPARTYL DIPEPTIDASE"/>
    <property type="match status" value="1"/>
</dbReference>
<dbReference type="PANTHER" id="PTHR20842">
    <property type="entry name" value="PROTEASE S51 ALPHA-ASPARTYL DIPEPTIDASE"/>
    <property type="match status" value="1"/>
</dbReference>
<dbReference type="Pfam" id="PF03575">
    <property type="entry name" value="Peptidase_S51"/>
    <property type="match status" value="1"/>
</dbReference>
<dbReference type="SUPFAM" id="SSF52317">
    <property type="entry name" value="Class I glutamine amidotransferase-like"/>
    <property type="match status" value="1"/>
</dbReference>
<feature type="chain" id="PRO_0000209957" description="Peptidase E">
    <location>
        <begin position="1"/>
        <end position="229"/>
    </location>
</feature>
<feature type="active site" description="Charge relay system" evidence="1">
    <location>
        <position position="120"/>
    </location>
</feature>
<feature type="active site" description="Charge relay system" evidence="1">
    <location>
        <position position="135"/>
    </location>
</feature>
<feature type="active site" description="Charge relay system" evidence="1">
    <location>
        <position position="157"/>
    </location>
</feature>
<gene>
    <name evidence="1" type="primary">pepE</name>
    <name type="ordered locus">c4980</name>
</gene>
<evidence type="ECO:0000255" key="1">
    <source>
        <dbReference type="HAMAP-Rule" id="MF_00510"/>
    </source>
</evidence>
<sequence length="229" mass="24560">MELLLLSNSTLPGKAWLEHALPLIAEQLQGRRSAVFIPFAGVTQTWDDYTAKTAAVLASLGVSVTGIHSVVDPVAAIENAEIVIVGGGNTFQLLKQCRERGLLAPITDVVKRGALYIGWSAGANLACPTIRTTNDMPIVDPQGFDALNLFPLQINPHFTNALPEGHKGETREQRIRELLVVAPELTIIGLPEGNWITVSKGHATLGGPNTTYVFKAGEEAVPLEAGHRF</sequence>
<name>PEPE_ECOL6</name>